<reference key="1">
    <citation type="submission" date="1995-11" db="EMBL/GenBank/DDBJ databases">
        <authorList>
            <person name="Macnab R.M."/>
        </authorList>
    </citation>
    <scope>NUCLEOTIDE SEQUENCE [GENOMIC DNA]</scope>
    <source>
        <strain>K12</strain>
    </source>
</reference>
<reference key="2">
    <citation type="journal article" date="1996" name="DNA Res.">
        <title>A 460-kb DNA sequence of the Escherichia coli K-12 genome corresponding to the 40.1-50.0 min region on the linkage map.</title>
        <authorList>
            <person name="Itoh T."/>
            <person name="Aiba H."/>
            <person name="Baba T."/>
            <person name="Fujita K."/>
            <person name="Hayashi K."/>
            <person name="Inada T."/>
            <person name="Isono K."/>
            <person name="Kasai H."/>
            <person name="Kimura S."/>
            <person name="Kitakawa M."/>
            <person name="Kitagawa M."/>
            <person name="Makino K."/>
            <person name="Miki T."/>
            <person name="Mizobuchi K."/>
            <person name="Mori H."/>
            <person name="Mori T."/>
            <person name="Motomura K."/>
            <person name="Nakade S."/>
            <person name="Nakamura Y."/>
            <person name="Nashimoto H."/>
            <person name="Nishio Y."/>
            <person name="Oshima T."/>
            <person name="Saito N."/>
            <person name="Sampei G."/>
            <person name="Seki Y."/>
            <person name="Sivasundaram S."/>
            <person name="Tagami H."/>
            <person name="Takeda J."/>
            <person name="Takemoto K."/>
            <person name="Wada C."/>
            <person name="Yamamoto Y."/>
            <person name="Horiuchi T."/>
        </authorList>
    </citation>
    <scope>NUCLEOTIDE SEQUENCE [LARGE SCALE GENOMIC DNA]</scope>
    <source>
        <strain>K12 / W3110 / ATCC 27325 / DSM 5911</strain>
    </source>
</reference>
<reference key="3">
    <citation type="journal article" date="1997" name="Science">
        <title>The complete genome sequence of Escherichia coli K-12.</title>
        <authorList>
            <person name="Blattner F.R."/>
            <person name="Plunkett G. III"/>
            <person name="Bloch C.A."/>
            <person name="Perna N.T."/>
            <person name="Burland V."/>
            <person name="Riley M."/>
            <person name="Collado-Vides J."/>
            <person name="Glasner J.D."/>
            <person name="Rode C.K."/>
            <person name="Mayhew G.F."/>
            <person name="Gregor J."/>
            <person name="Davis N.W."/>
            <person name="Kirkpatrick H.A."/>
            <person name="Goeden M.A."/>
            <person name="Rose D.J."/>
            <person name="Mau B."/>
            <person name="Shao Y."/>
        </authorList>
    </citation>
    <scope>NUCLEOTIDE SEQUENCE [LARGE SCALE GENOMIC DNA]</scope>
    <source>
        <strain>K12 / MG1655 / ATCC 47076</strain>
    </source>
</reference>
<reference key="4">
    <citation type="journal article" date="2006" name="Mol. Syst. Biol.">
        <title>Highly accurate genome sequences of Escherichia coli K-12 strains MG1655 and W3110.</title>
        <authorList>
            <person name="Hayashi K."/>
            <person name="Morooka N."/>
            <person name="Yamamoto Y."/>
            <person name="Fujita K."/>
            <person name="Isono K."/>
            <person name="Choi S."/>
            <person name="Ohtsubo E."/>
            <person name="Baba T."/>
            <person name="Wanner B.L."/>
            <person name="Mori H."/>
            <person name="Horiuchi T."/>
        </authorList>
    </citation>
    <scope>NUCLEOTIDE SEQUENCE [LARGE SCALE GENOMIC DNA]</scope>
    <source>
        <strain>K12 / W3110 / ATCC 27325 / DSM 5911</strain>
    </source>
</reference>
<reference key="5">
    <citation type="journal article" date="1996" name="J. Bacteriol.">
        <title>Characterization of the flagellar hook length control protein fliK of Salmonella typhimurium and Escherichia coli.</title>
        <authorList>
            <person name="Kawagishi I."/>
            <person name="Homma M."/>
            <person name="Williams A.W."/>
            <person name="Macnab R.M."/>
        </authorList>
    </citation>
    <scope>NUCLEOTIDE SEQUENCE [GENOMIC DNA] OF 114-147</scope>
    <source>
        <strain>K12 / KS650</strain>
    </source>
</reference>
<protein>
    <recommendedName>
        <fullName>Flagellar FliJ protein</fullName>
    </recommendedName>
</protein>
<name>FLIJ_ECOLI</name>
<proteinExistence type="evidence at protein level"/>
<keyword id="KW-1005">Bacterial flagellum biogenesis</keyword>
<keyword id="KW-1006">Bacterial flagellum protein export</keyword>
<keyword id="KW-1003">Cell membrane</keyword>
<keyword id="KW-0145">Chemotaxis</keyword>
<keyword id="KW-0472">Membrane</keyword>
<keyword id="KW-0653">Protein transport</keyword>
<keyword id="KW-1185">Reference proteome</keyword>
<keyword id="KW-0813">Transport</keyword>
<accession>P52613</accession>
<accession>P76326</accession>
<comment type="function">
    <text>The FliJ protein is a flagellar protein that affects chemotactic events. Mutations in FliJ results in failure to respond to chemotactic stimuli.</text>
</comment>
<comment type="interaction">
    <interactant intactId="EBI-554036">
        <id>P52613</id>
    </interactant>
    <interactant intactId="EBI-542934">
        <id>P06993</id>
        <label>malT</label>
    </interactant>
    <organismsDiffer>false</organismsDiffer>
    <experiments>3</experiments>
</comment>
<comment type="subcellular location">
    <subcellularLocation>
        <location>Cell membrane</location>
        <topology>Peripheral membrane protein</topology>
        <orientation>Cytoplasmic side</orientation>
    </subcellularLocation>
</comment>
<comment type="similarity">
    <text evidence="1">Belongs to the FliJ family.</text>
</comment>
<evidence type="ECO:0000305" key="1"/>
<feature type="chain" id="PRO_0000180901" description="Flagellar FliJ protein">
    <location>
        <begin position="1"/>
        <end position="147"/>
    </location>
</feature>
<feature type="sequence conflict" description="In Ref. 1; AAA82638." evidence="1" ref="1">
    <original>A</original>
    <variation>G</variation>
    <location>
        <position position="8"/>
    </location>
</feature>
<sequence>MAEHGALATLKDLAEKEVEDAARLLGEMRRGCQQAEEQLKMLIDYQNEYRNNLNSDMSAGITSNRWINYQQFIQTLEKAITQHRQQLNQWTQKVDIALNSWREKKQRLQAWQTLQERQSTAALLAENRLDQKKMDEFAQRAAMRKPE</sequence>
<gene>
    <name type="primary">fliJ</name>
    <name type="synonym">flaO</name>
    <name type="synonym">flaS</name>
    <name type="ordered locus">b1942</name>
    <name type="ordered locus">JW1926</name>
</gene>
<dbReference type="EMBL" id="L49147">
    <property type="protein sequence ID" value="AAA82638.1"/>
    <property type="molecule type" value="Genomic_DNA"/>
</dbReference>
<dbReference type="EMBL" id="U00096">
    <property type="protein sequence ID" value="AAC75009.1"/>
    <property type="molecule type" value="Genomic_DNA"/>
</dbReference>
<dbReference type="EMBL" id="AP009048">
    <property type="protein sequence ID" value="BAA15767.1"/>
    <property type="molecule type" value="Genomic_DNA"/>
</dbReference>
<dbReference type="EMBL" id="L43491">
    <property type="protein sequence ID" value="AAB06631.1"/>
    <property type="molecule type" value="Genomic_DNA"/>
</dbReference>
<dbReference type="PIR" id="C64958">
    <property type="entry name" value="C64958"/>
</dbReference>
<dbReference type="RefSeq" id="NP_416452.1">
    <property type="nucleotide sequence ID" value="NC_000913.3"/>
</dbReference>
<dbReference type="RefSeq" id="WP_000807579.1">
    <property type="nucleotide sequence ID" value="NZ_LN832404.1"/>
</dbReference>
<dbReference type="SMR" id="P52613"/>
<dbReference type="BioGRID" id="4260389">
    <property type="interactions" value="30"/>
</dbReference>
<dbReference type="BioGRID" id="850808">
    <property type="interactions" value="2"/>
</dbReference>
<dbReference type="ComplexPortal" id="CPX-5885">
    <property type="entry name" value="Flagellar export complex"/>
</dbReference>
<dbReference type="DIP" id="DIP-9656N"/>
<dbReference type="FunCoup" id="P52613">
    <property type="interactions" value="70"/>
</dbReference>
<dbReference type="IntAct" id="P52613">
    <property type="interactions" value="11"/>
</dbReference>
<dbReference type="STRING" id="511145.b1942"/>
<dbReference type="PaxDb" id="511145-b1942"/>
<dbReference type="EnsemblBacteria" id="AAC75009">
    <property type="protein sequence ID" value="AAC75009"/>
    <property type="gene ID" value="b1942"/>
</dbReference>
<dbReference type="GeneID" id="946454"/>
<dbReference type="KEGG" id="ecj:JW1926"/>
<dbReference type="KEGG" id="eco:b1942"/>
<dbReference type="KEGG" id="ecoc:C3026_11000"/>
<dbReference type="PATRIC" id="fig|1411691.4.peg.309"/>
<dbReference type="EchoBASE" id="EB4164"/>
<dbReference type="eggNOG" id="COG2882">
    <property type="taxonomic scope" value="Bacteria"/>
</dbReference>
<dbReference type="HOGENOM" id="CLU_119965_2_1_6"/>
<dbReference type="InParanoid" id="P52613"/>
<dbReference type="OMA" id="TWQNYQQ"/>
<dbReference type="OrthoDB" id="6465096at2"/>
<dbReference type="PhylomeDB" id="P52613"/>
<dbReference type="BioCyc" id="EcoCyc:G378-MONOMER"/>
<dbReference type="PRO" id="PR:P52613"/>
<dbReference type="Proteomes" id="UP000000625">
    <property type="component" value="Chromosome"/>
</dbReference>
<dbReference type="GO" id="GO:0009288">
    <property type="term" value="C:bacterial-type flagellum"/>
    <property type="evidence" value="ECO:0000303"/>
    <property type="project" value="ComplexPortal"/>
</dbReference>
<dbReference type="GO" id="GO:0120102">
    <property type="term" value="C:bacterial-type flagellum secretion apparatus"/>
    <property type="evidence" value="ECO:0000303"/>
    <property type="project" value="ComplexPortal"/>
</dbReference>
<dbReference type="GO" id="GO:0005886">
    <property type="term" value="C:plasma membrane"/>
    <property type="evidence" value="ECO:0007669"/>
    <property type="project" value="UniProtKB-SubCell"/>
</dbReference>
<dbReference type="GO" id="GO:0030257">
    <property type="term" value="C:type III protein secretion system complex"/>
    <property type="evidence" value="ECO:0000303"/>
    <property type="project" value="ComplexPortal"/>
</dbReference>
<dbReference type="GO" id="GO:0003774">
    <property type="term" value="F:cytoskeletal motor activity"/>
    <property type="evidence" value="ECO:0007669"/>
    <property type="project" value="InterPro"/>
</dbReference>
<dbReference type="GO" id="GO:0044781">
    <property type="term" value="P:bacterial-type flagellum organization"/>
    <property type="evidence" value="ECO:0007669"/>
    <property type="project" value="UniProtKB-KW"/>
</dbReference>
<dbReference type="GO" id="GO:0071973">
    <property type="term" value="P:bacterial-type flagellum-dependent cell motility"/>
    <property type="evidence" value="ECO:0000303"/>
    <property type="project" value="ComplexPortal"/>
</dbReference>
<dbReference type="GO" id="GO:0006935">
    <property type="term" value="P:chemotaxis"/>
    <property type="evidence" value="ECO:0000303"/>
    <property type="project" value="ComplexPortal"/>
</dbReference>
<dbReference type="GO" id="GO:0030254">
    <property type="term" value="P:protein secretion by the type III secretion system"/>
    <property type="evidence" value="ECO:0000303"/>
    <property type="project" value="ComplexPortal"/>
</dbReference>
<dbReference type="Gene3D" id="1.10.287.1700">
    <property type="match status" value="1"/>
</dbReference>
<dbReference type="InterPro" id="IPR053716">
    <property type="entry name" value="Flag_assembly_chemotaxis_eff"/>
</dbReference>
<dbReference type="InterPro" id="IPR018006">
    <property type="entry name" value="Flag_FliJ_proteobac"/>
</dbReference>
<dbReference type="InterPro" id="IPR012823">
    <property type="entry name" value="Flagell_FliJ"/>
</dbReference>
<dbReference type="InterPro" id="IPR052570">
    <property type="entry name" value="FliJ"/>
</dbReference>
<dbReference type="NCBIfam" id="TIGR02473">
    <property type="entry name" value="flagell_FliJ"/>
    <property type="match status" value="1"/>
</dbReference>
<dbReference type="PANTHER" id="PTHR38786">
    <property type="entry name" value="FLAGELLAR FLIJ PROTEIN"/>
    <property type="match status" value="1"/>
</dbReference>
<dbReference type="PANTHER" id="PTHR38786:SF1">
    <property type="entry name" value="FLAGELLAR FLIJ PROTEIN"/>
    <property type="match status" value="1"/>
</dbReference>
<dbReference type="Pfam" id="PF02050">
    <property type="entry name" value="FliJ"/>
    <property type="match status" value="1"/>
</dbReference>
<dbReference type="PIRSF" id="PIRSF019404">
    <property type="entry name" value="FliJ"/>
    <property type="match status" value="1"/>
</dbReference>
<dbReference type="PRINTS" id="PR01004">
    <property type="entry name" value="FLGFLIJ"/>
</dbReference>
<organism>
    <name type="scientific">Escherichia coli (strain K12)</name>
    <dbReference type="NCBI Taxonomy" id="83333"/>
    <lineage>
        <taxon>Bacteria</taxon>
        <taxon>Pseudomonadati</taxon>
        <taxon>Pseudomonadota</taxon>
        <taxon>Gammaproteobacteria</taxon>
        <taxon>Enterobacterales</taxon>
        <taxon>Enterobacteriaceae</taxon>
        <taxon>Escherichia</taxon>
    </lineage>
</organism>